<name>LIN54_RAT</name>
<keyword id="KW-0007">Acetylation</keyword>
<keyword id="KW-0010">Activator</keyword>
<keyword id="KW-0131">Cell cycle</keyword>
<keyword id="KW-0238">DNA-binding</keyword>
<keyword id="KW-1017">Isopeptide bond</keyword>
<keyword id="KW-0479">Metal-binding</keyword>
<keyword id="KW-0539">Nucleus</keyword>
<keyword id="KW-0597">Phosphoprotein</keyword>
<keyword id="KW-1185">Reference proteome</keyword>
<keyword id="KW-0678">Repressor</keyword>
<keyword id="KW-0804">Transcription</keyword>
<keyword id="KW-0805">Transcription regulation</keyword>
<keyword id="KW-0832">Ubl conjugation</keyword>
<keyword id="KW-0862">Zinc</keyword>
<protein>
    <recommendedName>
        <fullName>Protein lin-54 homolog</fullName>
    </recommendedName>
</protein>
<accession>Q641Z1</accession>
<accession>Q4FZV6</accession>
<sequence>MEVVPAEVNSLLPDDIMDTAITLVDEDSIEAVIVSSPIPMETELEEIVSINSTGDSTATPISTEPITVYSNHTNQVAVNTTVSKADSNTTVKPAFPSGLQKLGAQTPVTISANQIILNKVSQTSDLKLGNQTLKPDGQKLILTTLGKSGSPIVLALPHSQLPQAQKVTAQAQPGDAKLPPQQIKVVTIGGRPEVKPAIGVSALTPGSQLINTTTQPSVLQTQQLKTVQIAKKPRTPTSGPVITKLIFAKPINSKAVTGQTTQASPPVVTGRVLSQSAPGTPSKTITISESGVIGSTLNSTTQTPNKIAISPLKSPNKTVKSAVQTITVGGMSTSQFKTIIPLAAAPNVQPIQVPGSKFHYVRLVTATTAGSSAPPVSQSPSVNTQPLQQAKPVVVNTTPVRMSVPFVQAQAVKQVVPKPINSTSQIVTTSQPQQRLIMPATPLPQIQPNLTNLPPGTVLAPAPGTGNVGYAVLPAQYVTQLQQSSYVSIAGNSNFTGTSGIQTQARVSFNGIIPSESASRPRKPCNCTKSLCLKLYCDCFANGEFCNNCNCTNCYNNLEHENERQKAIKACLDRNPEAFKPKIGKGKEGESDRRHSKGCNCKRSGCLKNYCECYEAKIMCSSICKCIGCKNFEESPERKTLMHLADAAEVRVQQQTAAKTKLSSQISDLLTRPTPALNSGGGKLPFTFVTKEVAEATCNCLLAQAEQADKKGKSKAAAERMILEEFGRCLMSVINSAGKAKSDPCAMHC</sequence>
<evidence type="ECO:0000250" key="1"/>
<evidence type="ECO:0000250" key="2">
    <source>
        <dbReference type="UniProtKB" id="Q6MZP7"/>
    </source>
</evidence>
<evidence type="ECO:0000255" key="3">
    <source>
        <dbReference type="PROSITE-ProRule" id="PRU00971"/>
    </source>
</evidence>
<evidence type="ECO:0000305" key="4"/>
<evidence type="ECO:0007744" key="5">
    <source>
    </source>
</evidence>
<reference key="1">
    <citation type="journal article" date="2004" name="Nature">
        <title>Genome sequence of the Brown Norway rat yields insights into mammalian evolution.</title>
        <authorList>
            <person name="Gibbs R.A."/>
            <person name="Weinstock G.M."/>
            <person name="Metzker M.L."/>
            <person name="Muzny D.M."/>
            <person name="Sodergren E.J."/>
            <person name="Scherer S."/>
            <person name="Scott G."/>
            <person name="Steffen D."/>
            <person name="Worley K.C."/>
            <person name="Burch P.E."/>
            <person name="Okwuonu G."/>
            <person name="Hines S."/>
            <person name="Lewis L."/>
            <person name="Deramo C."/>
            <person name="Delgado O."/>
            <person name="Dugan-Rocha S."/>
            <person name="Miner G."/>
            <person name="Morgan M."/>
            <person name="Hawes A."/>
            <person name="Gill R."/>
            <person name="Holt R.A."/>
            <person name="Adams M.D."/>
            <person name="Amanatides P.G."/>
            <person name="Baden-Tillson H."/>
            <person name="Barnstead M."/>
            <person name="Chin S."/>
            <person name="Evans C.A."/>
            <person name="Ferriera S."/>
            <person name="Fosler C."/>
            <person name="Glodek A."/>
            <person name="Gu Z."/>
            <person name="Jennings D."/>
            <person name="Kraft C.L."/>
            <person name="Nguyen T."/>
            <person name="Pfannkoch C.M."/>
            <person name="Sitter C."/>
            <person name="Sutton G.G."/>
            <person name="Venter J.C."/>
            <person name="Woodage T."/>
            <person name="Smith D."/>
            <person name="Lee H.-M."/>
            <person name="Gustafson E."/>
            <person name="Cahill P."/>
            <person name="Kana A."/>
            <person name="Doucette-Stamm L."/>
            <person name="Weinstock K."/>
            <person name="Fechtel K."/>
            <person name="Weiss R.B."/>
            <person name="Dunn D.M."/>
            <person name="Green E.D."/>
            <person name="Blakesley R.W."/>
            <person name="Bouffard G.G."/>
            <person name="De Jong P.J."/>
            <person name="Osoegawa K."/>
            <person name="Zhu B."/>
            <person name="Marra M."/>
            <person name="Schein J."/>
            <person name="Bosdet I."/>
            <person name="Fjell C."/>
            <person name="Jones S."/>
            <person name="Krzywinski M."/>
            <person name="Mathewson C."/>
            <person name="Siddiqui A."/>
            <person name="Wye N."/>
            <person name="McPherson J."/>
            <person name="Zhao S."/>
            <person name="Fraser C.M."/>
            <person name="Shetty J."/>
            <person name="Shatsman S."/>
            <person name="Geer K."/>
            <person name="Chen Y."/>
            <person name="Abramzon S."/>
            <person name="Nierman W.C."/>
            <person name="Havlak P.H."/>
            <person name="Chen R."/>
            <person name="Durbin K.J."/>
            <person name="Egan A."/>
            <person name="Ren Y."/>
            <person name="Song X.-Z."/>
            <person name="Li B."/>
            <person name="Liu Y."/>
            <person name="Qin X."/>
            <person name="Cawley S."/>
            <person name="Cooney A.J."/>
            <person name="D'Souza L.M."/>
            <person name="Martin K."/>
            <person name="Wu J.Q."/>
            <person name="Gonzalez-Garay M.L."/>
            <person name="Jackson A.R."/>
            <person name="Kalafus K.J."/>
            <person name="McLeod M.P."/>
            <person name="Milosavljevic A."/>
            <person name="Virk D."/>
            <person name="Volkov A."/>
            <person name="Wheeler D.A."/>
            <person name="Zhang Z."/>
            <person name="Bailey J.A."/>
            <person name="Eichler E.E."/>
            <person name="Tuzun E."/>
            <person name="Birney E."/>
            <person name="Mongin E."/>
            <person name="Ureta-Vidal A."/>
            <person name="Woodwark C."/>
            <person name="Zdobnov E."/>
            <person name="Bork P."/>
            <person name="Suyama M."/>
            <person name="Torrents D."/>
            <person name="Alexandersson M."/>
            <person name="Trask B.J."/>
            <person name="Young J.M."/>
            <person name="Huang H."/>
            <person name="Wang H."/>
            <person name="Xing H."/>
            <person name="Daniels S."/>
            <person name="Gietzen D."/>
            <person name="Schmidt J."/>
            <person name="Stevens K."/>
            <person name="Vitt U."/>
            <person name="Wingrove J."/>
            <person name="Camara F."/>
            <person name="Mar Alba M."/>
            <person name="Abril J.F."/>
            <person name="Guigo R."/>
            <person name="Smit A."/>
            <person name="Dubchak I."/>
            <person name="Rubin E.M."/>
            <person name="Couronne O."/>
            <person name="Poliakov A."/>
            <person name="Huebner N."/>
            <person name="Ganten D."/>
            <person name="Goesele C."/>
            <person name="Hummel O."/>
            <person name="Kreitler T."/>
            <person name="Lee Y.-A."/>
            <person name="Monti J."/>
            <person name="Schulz H."/>
            <person name="Zimdahl H."/>
            <person name="Himmelbauer H."/>
            <person name="Lehrach H."/>
            <person name="Jacob H.J."/>
            <person name="Bromberg S."/>
            <person name="Gullings-Handley J."/>
            <person name="Jensen-Seaman M.I."/>
            <person name="Kwitek A.E."/>
            <person name="Lazar J."/>
            <person name="Pasko D."/>
            <person name="Tonellato P.J."/>
            <person name="Twigger S."/>
            <person name="Ponting C.P."/>
            <person name="Duarte J.M."/>
            <person name="Rice S."/>
            <person name="Goodstadt L."/>
            <person name="Beatson S.A."/>
            <person name="Emes R.D."/>
            <person name="Winter E.E."/>
            <person name="Webber C."/>
            <person name="Brandt P."/>
            <person name="Nyakatura G."/>
            <person name="Adetobi M."/>
            <person name="Chiaromonte F."/>
            <person name="Elnitski L."/>
            <person name="Eswara P."/>
            <person name="Hardison R.C."/>
            <person name="Hou M."/>
            <person name="Kolbe D."/>
            <person name="Makova K."/>
            <person name="Miller W."/>
            <person name="Nekrutenko A."/>
            <person name="Riemer C."/>
            <person name="Schwartz S."/>
            <person name="Taylor J."/>
            <person name="Yang S."/>
            <person name="Zhang Y."/>
            <person name="Lindpaintner K."/>
            <person name="Andrews T.D."/>
            <person name="Caccamo M."/>
            <person name="Clamp M."/>
            <person name="Clarke L."/>
            <person name="Curwen V."/>
            <person name="Durbin R.M."/>
            <person name="Eyras E."/>
            <person name="Searle S.M."/>
            <person name="Cooper G.M."/>
            <person name="Batzoglou S."/>
            <person name="Brudno M."/>
            <person name="Sidow A."/>
            <person name="Stone E.A."/>
            <person name="Payseur B.A."/>
            <person name="Bourque G."/>
            <person name="Lopez-Otin C."/>
            <person name="Puente X.S."/>
            <person name="Chakrabarti K."/>
            <person name="Chatterji S."/>
            <person name="Dewey C."/>
            <person name="Pachter L."/>
            <person name="Bray N."/>
            <person name="Yap V.B."/>
            <person name="Caspi A."/>
            <person name="Tesler G."/>
            <person name="Pevzner P.A."/>
            <person name="Haussler D."/>
            <person name="Roskin K.M."/>
            <person name="Baertsch R."/>
            <person name="Clawson H."/>
            <person name="Furey T.S."/>
            <person name="Hinrichs A.S."/>
            <person name="Karolchik D."/>
            <person name="Kent W.J."/>
            <person name="Rosenbloom K.R."/>
            <person name="Trumbower H."/>
            <person name="Weirauch M."/>
            <person name="Cooper D.N."/>
            <person name="Stenson P.D."/>
            <person name="Ma B."/>
            <person name="Brent M."/>
            <person name="Arumugam M."/>
            <person name="Shteynberg D."/>
            <person name="Copley R.R."/>
            <person name="Taylor M.S."/>
            <person name="Riethman H."/>
            <person name="Mudunuri U."/>
            <person name="Peterson J."/>
            <person name="Guyer M."/>
            <person name="Felsenfeld A."/>
            <person name="Old S."/>
            <person name="Mockrin S."/>
            <person name="Collins F.S."/>
        </authorList>
    </citation>
    <scope>NUCLEOTIDE SEQUENCE [LARGE SCALE GENOMIC DNA]</scope>
    <source>
        <strain>Brown Norway</strain>
    </source>
</reference>
<reference key="2">
    <citation type="journal article" date="2004" name="Genome Res.">
        <title>The status, quality, and expansion of the NIH full-length cDNA project: the Mammalian Gene Collection (MGC).</title>
        <authorList>
            <consortium name="The MGC Project Team"/>
        </authorList>
    </citation>
    <scope>NUCLEOTIDE SEQUENCE [LARGE SCALE MRNA] OF 271-749</scope>
    <source>
        <tissue>Placenta</tissue>
        <tissue>Testis</tissue>
    </source>
</reference>
<reference key="3">
    <citation type="journal article" date="2012" name="Nat. Commun.">
        <title>Quantitative maps of protein phosphorylation sites across 14 different rat organs and tissues.</title>
        <authorList>
            <person name="Lundby A."/>
            <person name="Secher A."/>
            <person name="Lage K."/>
            <person name="Nordsborg N.B."/>
            <person name="Dmytriyev A."/>
            <person name="Lundby C."/>
            <person name="Olsen J.V."/>
        </authorList>
    </citation>
    <scope>PHOSPHORYLATION [LARGE SCALE ANALYSIS] AT SER-310 AND SER-314</scope>
    <scope>IDENTIFICATION BY MASS SPECTROMETRY [LARGE SCALE ANALYSIS]</scope>
</reference>
<dbReference type="EMBL" id="AABR03090456">
    <property type="status" value="NOT_ANNOTATED_CDS"/>
    <property type="molecule type" value="Genomic_DNA"/>
</dbReference>
<dbReference type="EMBL" id="AABR03091900">
    <property type="status" value="NOT_ANNOTATED_CDS"/>
    <property type="molecule type" value="Genomic_DNA"/>
</dbReference>
<dbReference type="EMBL" id="AABR03089973">
    <property type="status" value="NOT_ANNOTATED_CDS"/>
    <property type="molecule type" value="Genomic_DNA"/>
</dbReference>
<dbReference type="EMBL" id="BC082043">
    <property type="protein sequence ID" value="AAH82043.1"/>
    <property type="status" value="ALT_SEQ"/>
    <property type="molecule type" value="mRNA"/>
</dbReference>
<dbReference type="EMBL" id="BC099076">
    <property type="protein sequence ID" value="AAH99076.1"/>
    <property type="molecule type" value="mRNA"/>
</dbReference>
<dbReference type="RefSeq" id="NP_001094034.1">
    <property type="nucleotide sequence ID" value="NM_001100564.2"/>
</dbReference>
<dbReference type="RefSeq" id="NP_001415507.1">
    <property type="nucleotide sequence ID" value="NM_001428578.1"/>
</dbReference>
<dbReference type="RefSeq" id="XP_006250720.1">
    <property type="nucleotide sequence ID" value="XM_006250658.5"/>
</dbReference>
<dbReference type="RefSeq" id="XP_006250721.1">
    <property type="nucleotide sequence ID" value="XM_006250659.5"/>
</dbReference>
<dbReference type="SMR" id="Q641Z1"/>
<dbReference type="FunCoup" id="Q641Z1">
    <property type="interactions" value="3781"/>
</dbReference>
<dbReference type="STRING" id="10116.ENSRNOP00000003006"/>
<dbReference type="GlyGen" id="Q641Z1">
    <property type="glycosylation" value="2 sites"/>
</dbReference>
<dbReference type="iPTMnet" id="Q641Z1"/>
<dbReference type="PhosphoSitePlus" id="Q641Z1"/>
<dbReference type="PaxDb" id="10116-ENSRNOP00000003006"/>
<dbReference type="GeneID" id="305171"/>
<dbReference type="KEGG" id="rno:305171"/>
<dbReference type="AGR" id="RGD:1311361"/>
<dbReference type="CTD" id="132660"/>
<dbReference type="RGD" id="1311361">
    <property type="gene designation" value="Lin54"/>
</dbReference>
<dbReference type="VEuPathDB" id="HostDB:ENSRNOG00000002203"/>
<dbReference type="eggNOG" id="KOG1171">
    <property type="taxonomic scope" value="Eukaryota"/>
</dbReference>
<dbReference type="HOGENOM" id="CLU_024128_0_0_1"/>
<dbReference type="InParanoid" id="Q641Z1"/>
<dbReference type="PhylomeDB" id="Q641Z1"/>
<dbReference type="TreeFam" id="TF313189"/>
<dbReference type="Reactome" id="R-RNO-1538133">
    <property type="pathway name" value="G0 and Early G1"/>
</dbReference>
<dbReference type="PRO" id="PR:Q641Z1"/>
<dbReference type="Proteomes" id="UP000002494">
    <property type="component" value="Chromosome 14"/>
</dbReference>
<dbReference type="Bgee" id="ENSRNOG00000002203">
    <property type="expression patterns" value="Expressed in thymus and 19 other cell types or tissues"/>
</dbReference>
<dbReference type="GO" id="GO:0005634">
    <property type="term" value="C:nucleus"/>
    <property type="evidence" value="ECO:0000318"/>
    <property type="project" value="GO_Central"/>
</dbReference>
<dbReference type="GO" id="GO:0090571">
    <property type="term" value="C:RNA polymerase II transcription repressor complex"/>
    <property type="evidence" value="ECO:0000266"/>
    <property type="project" value="RGD"/>
</dbReference>
<dbReference type="GO" id="GO:0046872">
    <property type="term" value="F:metal ion binding"/>
    <property type="evidence" value="ECO:0007669"/>
    <property type="project" value="UniProtKB-KW"/>
</dbReference>
<dbReference type="GO" id="GO:0003680">
    <property type="term" value="F:minor groove of adenine-thymine-rich DNA binding"/>
    <property type="evidence" value="ECO:0000266"/>
    <property type="project" value="RGD"/>
</dbReference>
<dbReference type="GO" id="GO:0001067">
    <property type="term" value="F:transcription regulatory region nucleic acid binding"/>
    <property type="evidence" value="ECO:0000266"/>
    <property type="project" value="RGD"/>
</dbReference>
<dbReference type="GO" id="GO:0034728">
    <property type="term" value="P:nucleosome organization"/>
    <property type="evidence" value="ECO:0000266"/>
    <property type="project" value="RGD"/>
</dbReference>
<dbReference type="GO" id="GO:0006355">
    <property type="term" value="P:regulation of DNA-templated transcription"/>
    <property type="evidence" value="ECO:0000318"/>
    <property type="project" value="GO_Central"/>
</dbReference>
<dbReference type="InterPro" id="IPR005172">
    <property type="entry name" value="CRC"/>
</dbReference>
<dbReference type="InterPro" id="IPR028307">
    <property type="entry name" value="Lin-54_fam"/>
</dbReference>
<dbReference type="InterPro" id="IPR033467">
    <property type="entry name" value="Tesmin/TSO1-like_CXC"/>
</dbReference>
<dbReference type="PANTHER" id="PTHR12446:SF36">
    <property type="entry name" value="PROTEIN LIN-54 HOMOLOG"/>
    <property type="match status" value="1"/>
</dbReference>
<dbReference type="PANTHER" id="PTHR12446">
    <property type="entry name" value="TESMIN/TSO1-RELATED"/>
    <property type="match status" value="1"/>
</dbReference>
<dbReference type="Pfam" id="PF03638">
    <property type="entry name" value="TCR"/>
    <property type="match status" value="2"/>
</dbReference>
<dbReference type="SMART" id="SM01114">
    <property type="entry name" value="CXC"/>
    <property type="match status" value="2"/>
</dbReference>
<dbReference type="PROSITE" id="PS51634">
    <property type="entry name" value="CRC"/>
    <property type="match status" value="1"/>
</dbReference>
<gene>
    <name type="primary">Lin54</name>
</gene>
<feature type="chain" id="PRO_0000341392" description="Protein lin-54 homolog">
    <location>
        <begin position="1"/>
        <end position="749"/>
    </location>
</feature>
<feature type="domain" description="CRC" evidence="3">
    <location>
        <begin position="521"/>
        <end position="634"/>
    </location>
</feature>
<feature type="region of interest" description="DNA-binding" evidence="2">
    <location>
        <begin position="523"/>
        <end position="536"/>
    </location>
</feature>
<feature type="region of interest" description="Linker" evidence="2">
    <location>
        <begin position="583"/>
        <end position="596"/>
    </location>
</feature>
<feature type="region of interest" description="DNA-binding" evidence="2">
    <location>
        <begin position="599"/>
        <end position="612"/>
    </location>
</feature>
<feature type="binding site" evidence="2">
    <location>
        <position position="525"/>
    </location>
    <ligand>
        <name>Zn(2+)</name>
        <dbReference type="ChEBI" id="CHEBI:29105"/>
        <label>1</label>
    </ligand>
</feature>
<feature type="binding site" evidence="2">
    <location>
        <position position="525"/>
    </location>
    <ligand>
        <name>Zn(2+)</name>
        <dbReference type="ChEBI" id="CHEBI:29105"/>
        <label>2</label>
    </ligand>
</feature>
<feature type="binding site" evidence="2">
    <location>
        <position position="527"/>
    </location>
    <ligand>
        <name>Zn(2+)</name>
        <dbReference type="ChEBI" id="CHEBI:29105"/>
        <label>1</label>
    </ligand>
</feature>
<feature type="binding site" evidence="2">
    <location>
        <position position="532"/>
    </location>
    <ligand>
        <name>Zn(2+)</name>
        <dbReference type="ChEBI" id="CHEBI:29105"/>
        <label>1</label>
    </ligand>
</feature>
<feature type="binding site" evidence="2">
    <location>
        <position position="532"/>
    </location>
    <ligand>
        <name>Zn(2+)</name>
        <dbReference type="ChEBI" id="CHEBI:29105"/>
        <label>3</label>
    </ligand>
</feature>
<feature type="binding site" evidence="2">
    <location>
        <position position="537"/>
    </location>
    <ligand>
        <name>Zn(2+)</name>
        <dbReference type="ChEBI" id="CHEBI:29105"/>
        <label>1</label>
    </ligand>
</feature>
<feature type="binding site" evidence="2">
    <location>
        <position position="539"/>
    </location>
    <ligand>
        <name>Zn(2+)</name>
        <dbReference type="ChEBI" id="CHEBI:29105"/>
        <label>2</label>
    </ligand>
</feature>
<feature type="binding site" evidence="2">
    <location>
        <position position="546"/>
    </location>
    <ligand>
        <name>Zn(2+)</name>
        <dbReference type="ChEBI" id="CHEBI:29105"/>
        <label>2</label>
    </ligand>
</feature>
<feature type="binding site" evidence="2">
    <location>
        <position position="546"/>
    </location>
    <ligand>
        <name>Zn(2+)</name>
        <dbReference type="ChEBI" id="CHEBI:29105"/>
        <label>3</label>
    </ligand>
</feature>
<feature type="binding site" evidence="2">
    <location>
        <position position="549"/>
    </location>
    <ligand>
        <name>Zn(2+)</name>
        <dbReference type="ChEBI" id="CHEBI:29105"/>
        <label>2</label>
    </ligand>
</feature>
<feature type="binding site" evidence="2">
    <location>
        <position position="551"/>
    </location>
    <ligand>
        <name>Zn(2+)</name>
        <dbReference type="ChEBI" id="CHEBI:29105"/>
        <label>3</label>
    </ligand>
</feature>
<feature type="binding site" evidence="2">
    <location>
        <position position="554"/>
    </location>
    <ligand>
        <name>Zn(2+)</name>
        <dbReference type="ChEBI" id="CHEBI:29105"/>
        <label>3</label>
    </ligand>
</feature>
<feature type="binding site" evidence="2">
    <location>
        <position position="599"/>
    </location>
    <ligand>
        <name>Zn(2+)</name>
        <dbReference type="ChEBI" id="CHEBI:29105"/>
        <label>4</label>
    </ligand>
</feature>
<feature type="binding site" evidence="2">
    <location>
        <position position="599"/>
    </location>
    <ligand>
        <name>Zn(2+)</name>
        <dbReference type="ChEBI" id="CHEBI:29105"/>
        <label>5</label>
    </ligand>
</feature>
<feature type="binding site" evidence="2">
    <location>
        <position position="601"/>
    </location>
    <ligand>
        <name>Zn(2+)</name>
        <dbReference type="ChEBI" id="CHEBI:29105"/>
        <label>4</label>
    </ligand>
</feature>
<feature type="binding site" evidence="2">
    <location>
        <position position="606"/>
    </location>
    <ligand>
        <name>Zn(2+)</name>
        <dbReference type="ChEBI" id="CHEBI:29105"/>
        <label>4</label>
    </ligand>
</feature>
<feature type="binding site" evidence="2">
    <location>
        <position position="606"/>
    </location>
    <ligand>
        <name>Zn(2+)</name>
        <dbReference type="ChEBI" id="CHEBI:29105"/>
        <label>6</label>
    </ligand>
</feature>
<feature type="binding site" evidence="2">
    <location>
        <position position="611"/>
    </location>
    <ligand>
        <name>Zn(2+)</name>
        <dbReference type="ChEBI" id="CHEBI:29105"/>
        <label>4</label>
    </ligand>
</feature>
<feature type="binding site" evidence="2">
    <location>
        <position position="613"/>
    </location>
    <ligand>
        <name>Zn(2+)</name>
        <dbReference type="ChEBI" id="CHEBI:29105"/>
        <label>5</label>
    </ligand>
</feature>
<feature type="binding site" evidence="2">
    <location>
        <position position="620"/>
    </location>
    <ligand>
        <name>Zn(2+)</name>
        <dbReference type="ChEBI" id="CHEBI:29105"/>
        <label>5</label>
    </ligand>
</feature>
<feature type="binding site" evidence="2">
    <location>
        <position position="620"/>
    </location>
    <ligand>
        <name>Zn(2+)</name>
        <dbReference type="ChEBI" id="CHEBI:29105"/>
        <label>6</label>
    </ligand>
</feature>
<feature type="binding site" evidence="2">
    <location>
        <position position="624"/>
    </location>
    <ligand>
        <name>Zn(2+)</name>
        <dbReference type="ChEBI" id="CHEBI:29105"/>
        <label>5</label>
    </ligand>
</feature>
<feature type="binding site" evidence="2">
    <location>
        <position position="626"/>
    </location>
    <ligand>
        <name>Zn(2+)</name>
        <dbReference type="ChEBI" id="CHEBI:29105"/>
        <label>6</label>
    </ligand>
</feature>
<feature type="binding site" evidence="2">
    <location>
        <position position="629"/>
    </location>
    <ligand>
        <name>Zn(2+)</name>
        <dbReference type="ChEBI" id="CHEBI:29105"/>
        <label>6</label>
    </ligand>
</feature>
<feature type="site" description="Critical for interaction with target DNA" evidence="2">
    <location>
        <position position="536"/>
    </location>
</feature>
<feature type="site" description="Interaction with DNA" evidence="2">
    <location>
        <position position="574"/>
    </location>
</feature>
<feature type="site" description="Critical for interaction with target DNA" evidence="2">
    <location>
        <position position="610"/>
    </location>
</feature>
<feature type="modified residue" description="N6-acetyllysine" evidence="2">
    <location>
        <position position="244"/>
    </location>
</feature>
<feature type="modified residue" description="N6-acetyllysine" evidence="2">
    <location>
        <position position="249"/>
    </location>
</feature>
<feature type="modified residue" description="Phosphoserine" evidence="2">
    <location>
        <position position="264"/>
    </location>
</feature>
<feature type="modified residue" description="Phosphoserine" evidence="2">
    <location>
        <position position="282"/>
    </location>
</feature>
<feature type="modified residue" description="Phosphoserine" evidence="5">
    <location>
        <position position="310"/>
    </location>
</feature>
<feature type="modified residue" description="Phosphoserine" evidence="5">
    <location>
        <position position="314"/>
    </location>
</feature>
<feature type="modified residue" description="Phosphoserine" evidence="2">
    <location>
        <position position="635"/>
    </location>
</feature>
<feature type="cross-link" description="Glycyl lysine isopeptide (Lys-Gly) (interchain with G-Cter in SUMO2)" evidence="2">
    <location>
        <position position="139"/>
    </location>
</feature>
<feature type="cross-link" description="Glycyl lysine isopeptide (Lys-Gly) (interchain with G-Cter in SUMO2)" evidence="2">
    <location>
        <position position="357"/>
    </location>
</feature>
<feature type="cross-link" description="Glycyl lysine isopeptide (Lys-Gly) (interchain with G-Cter in SUMO2)" evidence="2">
    <location>
        <position position="639"/>
    </location>
</feature>
<feature type="cross-link" description="Glycyl lysine isopeptide (Lys-Gly) (interchain with G-Cter in SUMO2)" evidence="2">
    <location>
        <position position="659"/>
    </location>
</feature>
<feature type="cross-link" description="Glycyl lysine isopeptide (Lys-Gly) (interchain with G-Cter in SUMO2)" evidence="2">
    <location>
        <position position="661"/>
    </location>
</feature>
<proteinExistence type="evidence at protein level"/>
<comment type="function">
    <text evidence="2">Component of the DREAM complex, a multiprotein complex that can both act as a transcription activator or repressor depending on the context. In G0 phase, the complex binds to more than 800 promoters and is required for repression of E2F target genes. In S phase, the complex selectively binds to the promoters of G2/M genes whose products are required for mitosis and participates in their cell cycle dependent activation. In the complex, acts as a DNA-binding protein that binds the promoter of CDK1 in a sequence-specific manner. Specifically recognizes the consensus motif 5'-TTYRAA-3' in target DNA.</text>
</comment>
<comment type="subunit">
    <text evidence="1">Component of the DREAM complex (also named LINC complex) at least composed of E2F4, E2F5, LIN9, LIN37, LIN52, LIN54, MYBL1, MYBL2, RBL1, RBL2, RBBP4, RBL2, TFDP1 and TFDP2. The complex exists in quiescent cells where it represses cell cycle-dependent genes. It dissociates in S phase when LIN9, LIN37, LIN52 and LIN54 form a subcomplex that binds to MYBL2 (By similarity).</text>
</comment>
<comment type="subcellular location">
    <subcellularLocation>
        <location evidence="1">Nucleus</location>
    </subcellularLocation>
</comment>
<comment type="domain">
    <text evidence="2">The CRC domain mediates DNA-binding. It contains two CXC subdomains (joined by a flexible linker) which are both required for efficient association with target DNA. Each CXC subdomain coordinates three Zn(2+) ions.</text>
</comment>
<comment type="similarity">
    <text evidence="4">Belongs to the lin-54 family.</text>
</comment>
<comment type="sequence caution" evidence="4">
    <conflict type="miscellaneous discrepancy">
        <sequence resource="EMBL-CDS" id="AAH82043"/>
    </conflict>
    <text>Contaminating sequence.</text>
</comment>
<organism>
    <name type="scientific">Rattus norvegicus</name>
    <name type="common">Rat</name>
    <dbReference type="NCBI Taxonomy" id="10116"/>
    <lineage>
        <taxon>Eukaryota</taxon>
        <taxon>Metazoa</taxon>
        <taxon>Chordata</taxon>
        <taxon>Craniata</taxon>
        <taxon>Vertebrata</taxon>
        <taxon>Euteleostomi</taxon>
        <taxon>Mammalia</taxon>
        <taxon>Eutheria</taxon>
        <taxon>Euarchontoglires</taxon>
        <taxon>Glires</taxon>
        <taxon>Rodentia</taxon>
        <taxon>Myomorpha</taxon>
        <taxon>Muroidea</taxon>
        <taxon>Muridae</taxon>
        <taxon>Murinae</taxon>
        <taxon>Rattus</taxon>
    </lineage>
</organism>